<keyword id="KW-0002">3D-structure</keyword>
<keyword id="KW-0067">ATP-binding</keyword>
<keyword id="KW-0963">Cytoplasm</keyword>
<keyword id="KW-0436">Ligase</keyword>
<keyword id="KW-0460">Magnesium</keyword>
<keyword id="KW-0464">Manganese</keyword>
<keyword id="KW-0479">Metal-binding</keyword>
<keyword id="KW-0511">Multifunctional enzyme</keyword>
<keyword id="KW-0547">Nucleotide-binding</keyword>
<keyword id="KW-0658">Purine biosynthesis</keyword>
<feature type="chain" id="PRO_0000454643" description="Bifunctional purine biosynthetic protein ADE5,7">
    <location>
        <begin position="1"/>
        <end position="802"/>
    </location>
</feature>
<feature type="domain" description="ATP-grasp" evidence="4">
    <location>
        <begin position="126"/>
        <end position="339"/>
    </location>
</feature>
<feature type="region of interest" description="GARS" evidence="3">
    <location>
        <begin position="1"/>
        <end position="444"/>
    </location>
</feature>
<feature type="region of interest" description="AIRS" evidence="3">
    <location>
        <begin position="455"/>
        <end position="788"/>
    </location>
</feature>
<feature type="binding site" evidence="4">
    <location>
        <begin position="157"/>
        <end position="218"/>
    </location>
    <ligand>
        <name>ATP</name>
        <dbReference type="ChEBI" id="CHEBI:30616"/>
    </ligand>
</feature>
<feature type="binding site" evidence="4">
    <location>
        <position position="307"/>
    </location>
    <ligand>
        <name>Mg(2+)</name>
        <dbReference type="ChEBI" id="CHEBI:18420"/>
    </ligand>
</feature>
<feature type="binding site" evidence="4">
    <location>
        <position position="309"/>
    </location>
    <ligand>
        <name>Mg(2+)</name>
        <dbReference type="ChEBI" id="CHEBI:18420"/>
    </ligand>
</feature>
<feature type="strand" evidence="11">
    <location>
        <begin position="12"/>
        <end position="20"/>
    </location>
</feature>
<feature type="helix" evidence="11">
    <location>
        <begin position="23"/>
        <end position="32"/>
    </location>
</feature>
<feature type="strand" evidence="11">
    <location>
        <begin position="38"/>
        <end position="45"/>
    </location>
</feature>
<feature type="helix" evidence="11">
    <location>
        <begin position="48"/>
        <end position="53"/>
    </location>
</feature>
<feature type="strand" evidence="11">
    <location>
        <begin position="57"/>
        <end position="59"/>
    </location>
</feature>
<feature type="turn" evidence="11">
    <location>
        <begin position="67"/>
        <end position="69"/>
    </location>
</feature>
<feature type="helix" evidence="11">
    <location>
        <begin position="71"/>
        <end position="80"/>
    </location>
</feature>
<feature type="strand" evidence="11">
    <location>
        <begin position="84"/>
        <end position="87"/>
    </location>
</feature>
<feature type="helix" evidence="11">
    <location>
        <begin position="90"/>
        <end position="94"/>
    </location>
</feature>
<feature type="helix" evidence="11">
    <location>
        <begin position="97"/>
        <end position="102"/>
    </location>
</feature>
<feature type="turn" evidence="11">
    <location>
        <begin position="103"/>
        <end position="105"/>
    </location>
</feature>
<feature type="strand" evidence="11">
    <location>
        <begin position="108"/>
        <end position="110"/>
    </location>
</feature>
<feature type="turn" evidence="11">
    <location>
        <begin position="113"/>
        <end position="116"/>
    </location>
</feature>
<feature type="helix" evidence="11">
    <location>
        <begin position="117"/>
        <end position="120"/>
    </location>
</feature>
<feature type="helix" evidence="11">
    <location>
        <begin position="122"/>
        <end position="131"/>
    </location>
</feature>
<feature type="strand" evidence="11">
    <location>
        <begin position="139"/>
        <end position="143"/>
    </location>
</feature>
<feature type="helix" evidence="11">
    <location>
        <begin position="144"/>
        <end position="146"/>
    </location>
</feature>
<feature type="helix" evidence="11">
    <location>
        <begin position="147"/>
        <end position="155"/>
    </location>
</feature>
<feature type="strand" evidence="11">
    <location>
        <begin position="164"/>
        <end position="169"/>
    </location>
</feature>
<feature type="helix" evidence="11">
    <location>
        <begin position="183"/>
        <end position="194"/>
    </location>
</feature>
<feature type="helix" evidence="11">
    <location>
        <begin position="200"/>
        <end position="204"/>
    </location>
</feature>
<feature type="strand" evidence="11">
    <location>
        <begin position="205"/>
        <end position="210"/>
    </location>
</feature>
<feature type="strand" evidence="11">
    <location>
        <begin position="216"/>
        <end position="226"/>
    </location>
</feature>
<feature type="strand" evidence="11">
    <location>
        <begin position="228"/>
        <end position="230"/>
    </location>
</feature>
<feature type="strand" evidence="11">
    <location>
        <begin position="234"/>
        <end position="236"/>
    </location>
</feature>
<feature type="strand" evidence="11">
    <location>
        <begin position="239"/>
        <end position="241"/>
    </location>
</feature>
<feature type="turn" evidence="11">
    <location>
        <begin position="242"/>
        <end position="244"/>
    </location>
</feature>
<feature type="strand" evidence="11">
    <location>
        <begin position="245"/>
        <end position="248"/>
    </location>
</feature>
<feature type="strand" evidence="11">
    <location>
        <begin position="252"/>
        <end position="257"/>
    </location>
</feature>
<feature type="helix" evidence="11">
    <location>
        <begin position="263"/>
        <end position="272"/>
    </location>
</feature>
<feature type="helix" evidence="11">
    <location>
        <begin position="274"/>
        <end position="283"/>
    </location>
</feature>
<feature type="strand" evidence="11">
    <location>
        <begin position="289"/>
        <end position="299"/>
    </location>
</feature>
<feature type="strand" evidence="11">
    <location>
        <begin position="302"/>
        <end position="309"/>
    </location>
</feature>
<feature type="helix" evidence="11">
    <location>
        <begin position="316"/>
        <end position="320"/>
    </location>
</feature>
<feature type="helix" evidence="11">
    <location>
        <begin position="321"/>
        <end position="323"/>
    </location>
</feature>
<feature type="helix" evidence="11">
    <location>
        <begin position="330"/>
        <end position="338"/>
    </location>
</feature>
<feature type="helix" evidence="11">
    <location>
        <begin position="342"/>
        <end position="344"/>
    </location>
</feature>
<feature type="strand" evidence="11">
    <location>
        <begin position="351"/>
        <end position="360"/>
    </location>
</feature>
<feature type="turn" evidence="11">
    <location>
        <begin position="362"/>
        <end position="365"/>
    </location>
</feature>
<feature type="strand" evidence="11">
    <location>
        <begin position="383"/>
        <end position="392"/>
    </location>
</feature>
<feature type="strand" evidence="11">
    <location>
        <begin position="397"/>
        <end position="399"/>
    </location>
</feature>
<feature type="strand" evidence="11">
    <location>
        <begin position="401"/>
        <end position="413"/>
    </location>
</feature>
<feature type="helix" evidence="11">
    <location>
        <begin position="414"/>
        <end position="425"/>
    </location>
</feature>
<feature type="helix" evidence="11">
    <location>
        <begin position="441"/>
        <end position="443"/>
    </location>
</feature>
<feature type="turn" evidence="12">
    <location>
        <begin position="499"/>
        <end position="503"/>
    </location>
</feature>
<feature type="strand" evidence="12">
    <location>
        <begin position="505"/>
        <end position="515"/>
    </location>
</feature>
<feature type="helix" evidence="12">
    <location>
        <begin position="518"/>
        <end position="526"/>
    </location>
</feature>
<feature type="helix" evidence="12">
    <location>
        <begin position="530"/>
        <end position="545"/>
    </location>
</feature>
<feature type="turn" evidence="12">
    <location>
        <begin position="546"/>
        <end position="548"/>
    </location>
</feature>
<feature type="strand" evidence="12">
    <location>
        <begin position="550"/>
        <end position="555"/>
    </location>
</feature>
<feature type="helix" evidence="12">
    <location>
        <begin position="566"/>
        <end position="582"/>
    </location>
</feature>
<feature type="strand" evidence="12">
    <location>
        <begin position="606"/>
        <end position="614"/>
    </location>
</feature>
<feature type="helix" evidence="12">
    <location>
        <begin position="615"/>
        <end position="617"/>
    </location>
</feature>
<feature type="strand" evidence="12">
    <location>
        <begin position="629"/>
        <end position="634"/>
    </location>
</feature>
<feature type="strand" evidence="12">
    <location>
        <begin position="636"/>
        <end position="638"/>
    </location>
</feature>
<feature type="helix" evidence="12">
    <location>
        <begin position="643"/>
        <end position="652"/>
    </location>
</feature>
<feature type="helix" evidence="12">
    <location>
        <begin position="669"/>
        <end position="674"/>
    </location>
</feature>
<feature type="helix" evidence="12">
    <location>
        <begin position="681"/>
        <end position="689"/>
    </location>
</feature>
<feature type="strand" evidence="12">
    <location>
        <begin position="694"/>
        <end position="698"/>
    </location>
</feature>
<feature type="helix" evidence="12">
    <location>
        <begin position="703"/>
        <end position="707"/>
    </location>
</feature>
<feature type="helix" evidence="12">
    <location>
        <begin position="708"/>
        <end position="711"/>
    </location>
</feature>
<feature type="strand" evidence="12">
    <location>
        <begin position="719"/>
        <end position="723"/>
    </location>
</feature>
<feature type="helix" evidence="12">
    <location>
        <begin position="731"/>
        <end position="739"/>
    </location>
</feature>
<feature type="helix" evidence="12">
    <location>
        <begin position="744"/>
        <end position="747"/>
    </location>
</feature>
<feature type="turn" evidence="12">
    <location>
        <begin position="748"/>
        <end position="750"/>
    </location>
</feature>
<feature type="strand" evidence="12">
    <location>
        <begin position="755"/>
        <end position="761"/>
    </location>
</feature>
<feature type="helix" evidence="12">
    <location>
        <begin position="763"/>
        <end position="765"/>
    </location>
</feature>
<feature type="helix" evidence="12">
    <location>
        <begin position="766"/>
        <end position="775"/>
    </location>
</feature>
<feature type="strand" evidence="12">
    <location>
        <begin position="780"/>
        <end position="795"/>
    </location>
</feature>
<feature type="turn" evidence="12">
    <location>
        <begin position="797"/>
        <end position="801"/>
    </location>
</feature>
<protein>
    <recommendedName>
        <fullName evidence="6">Bifunctional purine biosynthetic protein ADE5,7</fullName>
    </recommendedName>
    <domain>
        <recommendedName>
            <fullName evidence="7">Phosphoribosylamine--glycine ligase</fullName>
            <ecNumber evidence="5">6.3.4.13</ecNumber>
        </recommendedName>
        <alternativeName>
            <fullName evidence="7">Glycinamide ribonucleotide synthetase</fullName>
            <shortName evidence="2">GAR synthetase</shortName>
            <shortName evidence="7">GARS</shortName>
        </alternativeName>
        <alternativeName>
            <fullName evidence="7">Phosphoribosylglycinamide synthetase</fullName>
        </alternativeName>
    </domain>
    <domain>
        <recommendedName>
            <fullName evidence="7">Phosphoribosylformylglycinamidine cyclo-ligase</fullName>
            <ecNumber evidence="2">6.3.3.1</ecNumber>
        </recommendedName>
        <alternativeName>
            <fullName evidence="2">AIR synthase</fullName>
            <shortName evidence="2">AIR synthetase</shortName>
            <shortName evidence="7">AIRS</shortName>
        </alternativeName>
        <alternativeName>
            <fullName evidence="7">Phosphoribosyl-aminoimidazole synthetase</fullName>
        </alternativeName>
    </domain>
</protein>
<accession>J9VYP5</accession>
<sequence length="802" mass="84591">MPEITAFPQPKSDLSILLLGAGGREHALAFKLAQSSRVARIVVCPGNGGTALMGGKVSNLALPWGAPPAFRSIVEWAQKENIDLVVPGPEQPLVDGVEGAFKKVGIPVFGPSPAAAMLEGSKSLSKEFMARHNIPTAAFRSFTSTQYEDAVAYIKSKPFTSGRSVIKASGLAAGKGVLIPETDEEAFAALKSVMVDKEFGDAGDEVVVEEYLSGPEISVLAFSDGYTIVPMPAAQDHKRIGEGDTGLNTGGMGAYAPAPIATKEIMERCVKDVLEPTIKGMREDGYPFVGMLFTGFMITADGPRVLEYNVRFGDPETQALMLLLDEQTDLAEVLLACVERRLDSIKLGYKQGYAVSVVLASEGYPGSYPKGLPMTLNPTPEGVEVFHAGTKRSDNVTVTDGGRVLAVCASAPTLRAAVDLAYSGISQISFQGQTFRRDIAYRALSSEPPAEPKGLTYAAAGVSVDAGNDLVEAIKPVVKATRRPGADSDIGGFGGAFDLAKAGYKDPILVSGTDGVGTKLRVALDHGKHNTVGIDLVAMSVNDLIVQGAEPLYFLDYYACSKLDVPVAADVITGIAEGCLQAGCALIGGETAEMPGMYHGDDYDLAGFAVGVVERAQILPTPDIASGDVLLALSSSGPHSNGFSLIRKIVSLSNLSLHDTAPWDKNTSVGDALLTPTKVYIKPLLPGIKSGLYKGMSHITGGGFTENIPRIFSSASNLGVKLDLTSYSLPAIWKWLMRAGNVEAKEMVRTFNCGVGMIIIVAKDKADAALSSLKENGEEAWVIGEVQEKKGVEYVGLDKFGL</sequence>
<gene>
    <name evidence="1" type="primary">ADE57</name>
    <name evidence="6" type="synonym">ADE5,7</name>
    <name evidence="9" type="ORF">CNAG_06314</name>
</gene>
<evidence type="ECO:0000250" key="1">
    <source>
        <dbReference type="UniProtKB" id="P07244"/>
    </source>
</evidence>
<evidence type="ECO:0000250" key="2">
    <source>
        <dbReference type="UniProtKB" id="P20772"/>
    </source>
</evidence>
<evidence type="ECO:0000255" key="3"/>
<evidence type="ECO:0000255" key="4">
    <source>
        <dbReference type="PROSITE-ProRule" id="PRU00409"/>
    </source>
</evidence>
<evidence type="ECO:0000269" key="5">
    <source>
    </source>
</evidence>
<evidence type="ECO:0000303" key="6">
    <source>
    </source>
</evidence>
<evidence type="ECO:0000305" key="7"/>
<evidence type="ECO:0000305" key="8">
    <source>
    </source>
</evidence>
<evidence type="ECO:0000312" key="9">
    <source>
        <dbReference type="EMBL" id="AFR98551.1"/>
    </source>
</evidence>
<evidence type="ECO:0000312" key="10">
    <source>
        <dbReference type="Proteomes" id="UP000010091"/>
    </source>
</evidence>
<evidence type="ECO:0007829" key="11">
    <source>
        <dbReference type="PDB" id="7LVO"/>
    </source>
</evidence>
<evidence type="ECO:0007829" key="12">
    <source>
        <dbReference type="PDB" id="7LVP"/>
    </source>
</evidence>
<organism evidence="10">
    <name type="scientific">Cryptococcus neoformans var. grubii serotype A (strain H99 / ATCC 208821 / CBS 10515 / FGSC 9487)</name>
    <name type="common">Filobasidiella neoformans var. grubii</name>
    <dbReference type="NCBI Taxonomy" id="235443"/>
    <lineage>
        <taxon>Eukaryota</taxon>
        <taxon>Fungi</taxon>
        <taxon>Dikarya</taxon>
        <taxon>Basidiomycota</taxon>
        <taxon>Agaricomycotina</taxon>
        <taxon>Tremellomycetes</taxon>
        <taxon>Tremellales</taxon>
        <taxon>Cryptococcaceae</taxon>
        <taxon>Cryptococcus</taxon>
        <taxon>Cryptococcus neoformans species complex</taxon>
    </lineage>
</organism>
<comment type="function">
    <text evidence="5">Catalyzes the second and fifth step in the 'de novo' purine biosynthesis pathway; contains phosphoribosylamine--glycine ligase (GARS) and phosphoribosylformylglycinamidine cyclo-ligase (AIRS) activities.</text>
</comment>
<comment type="catalytic activity">
    <reaction evidence="2">
        <text>2-formamido-N(1)-(5-O-phospho-beta-D-ribosyl)acetamidine + ATP = 5-amino-1-(5-phospho-beta-D-ribosyl)imidazole + ADP + phosphate + H(+)</text>
        <dbReference type="Rhea" id="RHEA:23032"/>
        <dbReference type="ChEBI" id="CHEBI:15378"/>
        <dbReference type="ChEBI" id="CHEBI:30616"/>
        <dbReference type="ChEBI" id="CHEBI:43474"/>
        <dbReference type="ChEBI" id="CHEBI:137981"/>
        <dbReference type="ChEBI" id="CHEBI:147287"/>
        <dbReference type="ChEBI" id="CHEBI:456216"/>
        <dbReference type="EC" id="6.3.3.1"/>
    </reaction>
</comment>
<comment type="catalytic activity">
    <reaction evidence="5">
        <text>5-phospho-beta-D-ribosylamine + glycine + ATP = N(1)-(5-phospho-beta-D-ribosyl)glycinamide + ADP + phosphate + H(+)</text>
        <dbReference type="Rhea" id="RHEA:17453"/>
        <dbReference type="ChEBI" id="CHEBI:15378"/>
        <dbReference type="ChEBI" id="CHEBI:30616"/>
        <dbReference type="ChEBI" id="CHEBI:43474"/>
        <dbReference type="ChEBI" id="CHEBI:57305"/>
        <dbReference type="ChEBI" id="CHEBI:58681"/>
        <dbReference type="ChEBI" id="CHEBI:143788"/>
        <dbReference type="ChEBI" id="CHEBI:456216"/>
        <dbReference type="EC" id="6.3.4.13"/>
    </reaction>
</comment>
<comment type="cofactor">
    <cofactor evidence="4">
        <name>Mg(2+)</name>
        <dbReference type="ChEBI" id="CHEBI:18420"/>
    </cofactor>
    <cofactor evidence="4">
        <name>Mn(2+)</name>
        <dbReference type="ChEBI" id="CHEBI:29035"/>
    </cofactor>
    <text evidence="7">Binds two magnesium or manganese ions per subunit.</text>
</comment>
<comment type="biophysicochemical properties">
    <kinetics>
        <KM evidence="5">48 uM for ATP (at 37 degrees Celsius)</KM>
        <KM evidence="5">496 uM for glycine (at 37 degrees Celsius)</KM>
        <KM evidence="5">131 uM for phosphoribosyl-amine (at 37 degrees Celsius)</KM>
        <text evidence="5">kcat is 27.3 sec(-1) for phosphoribosylamine--glycine ligase activity (at 37 degrees Celsius).</text>
    </kinetics>
</comment>
<comment type="pathway">
    <text evidence="8">Purine metabolism; IMP biosynthesis via de novo pathway; 5-amino-1-(5-phospho-D-ribosyl)imidazole from N(2)-formyl-N(1)-(5-phospho-D-ribosyl)glycinamide: step 2/2.</text>
</comment>
<comment type="pathway">
    <text evidence="7">Purine metabolism; IMP biosynthesis via de novo pathway; N(1)-(5-phospho-D-ribosyl)glycinamide from 5-phospho-alpha-D-ribose 1-diphosphate: step 2/2.</text>
</comment>
<comment type="subunit">
    <text evidence="8">Homodimer.</text>
</comment>
<comment type="subcellular location">
    <subcellularLocation>
        <location evidence="2">Cytoplasm</location>
        <location evidence="2">Cytosol</location>
    </subcellularLocation>
</comment>
<comment type="disruption phenotype">
    <text evidence="5">Growth auxotrophic for adenine (PubMed:34416230). Avirulent in a mouse inhalation infection model (PubMed:34416230). Does not appear to affect production of the virulence factors melanin, protease, urease, or phospholipase B, or on capsule formation (PubMed:34416230).</text>
</comment>
<comment type="similarity">
    <text evidence="7">In the N-terminal section; belongs to the GARS family.</text>
</comment>
<comment type="similarity">
    <text evidence="7">In the C-terminal section; belongs to the AIR synthase family.</text>
</comment>
<name>PUR2_CRYNH</name>
<proteinExistence type="evidence at protein level"/>
<dbReference type="EC" id="6.3.4.13" evidence="5"/>
<dbReference type="EC" id="6.3.3.1" evidence="2"/>
<dbReference type="EMBL" id="CP003832">
    <property type="protein sequence ID" value="AFR98551.1"/>
    <property type="molecule type" value="Genomic_DNA"/>
</dbReference>
<dbReference type="RefSeq" id="XP_012053406.1">
    <property type="nucleotide sequence ID" value="XM_012198016.1"/>
</dbReference>
<dbReference type="PDB" id="7LVO">
    <property type="method" value="X-ray"/>
    <property type="resolution" value="2.00 A"/>
    <property type="chains" value="A=1-452"/>
</dbReference>
<dbReference type="PDB" id="7LVP">
    <property type="method" value="X-ray"/>
    <property type="resolution" value="2.24 A"/>
    <property type="chains" value="A=492-802"/>
</dbReference>
<dbReference type="PDBsum" id="7LVO"/>
<dbReference type="PDBsum" id="7LVP"/>
<dbReference type="SMR" id="J9VYP5"/>
<dbReference type="SwissPalm" id="J9VYP5"/>
<dbReference type="GeneID" id="23889525"/>
<dbReference type="KEGG" id="cng:CNAG_06314"/>
<dbReference type="VEuPathDB" id="FungiDB:CNAG_06314"/>
<dbReference type="HOGENOM" id="CLU_005361_1_1_1"/>
<dbReference type="OrthoDB" id="1939at5206"/>
<dbReference type="UniPathway" id="UPA00074">
    <property type="reaction ID" value="UER00125"/>
</dbReference>
<dbReference type="UniPathway" id="UPA00074">
    <property type="reaction ID" value="UER00129"/>
</dbReference>
<dbReference type="Proteomes" id="UP000010091">
    <property type="component" value="Chromosome 13"/>
</dbReference>
<dbReference type="GO" id="GO:0005829">
    <property type="term" value="C:cytosol"/>
    <property type="evidence" value="ECO:0007669"/>
    <property type="project" value="UniProtKB-SubCell"/>
</dbReference>
<dbReference type="GO" id="GO:0005524">
    <property type="term" value="F:ATP binding"/>
    <property type="evidence" value="ECO:0007669"/>
    <property type="project" value="UniProtKB-KW"/>
</dbReference>
<dbReference type="GO" id="GO:0046872">
    <property type="term" value="F:metal ion binding"/>
    <property type="evidence" value="ECO:0007669"/>
    <property type="project" value="UniProtKB-KW"/>
</dbReference>
<dbReference type="GO" id="GO:0004637">
    <property type="term" value="F:phosphoribosylamine-glycine ligase activity"/>
    <property type="evidence" value="ECO:0000314"/>
    <property type="project" value="UniProtKB"/>
</dbReference>
<dbReference type="GO" id="GO:0004641">
    <property type="term" value="F:phosphoribosylformylglycinamidine cyclo-ligase activity"/>
    <property type="evidence" value="ECO:0007669"/>
    <property type="project" value="UniProtKB-EC"/>
</dbReference>
<dbReference type="GO" id="GO:0006189">
    <property type="term" value="P:'de novo' IMP biosynthetic process"/>
    <property type="evidence" value="ECO:0000314"/>
    <property type="project" value="UniProtKB"/>
</dbReference>
<dbReference type="GO" id="GO:0046084">
    <property type="term" value="P:adenine biosynthetic process"/>
    <property type="evidence" value="ECO:0007669"/>
    <property type="project" value="TreeGrafter"/>
</dbReference>
<dbReference type="CDD" id="cd02196">
    <property type="entry name" value="PurM"/>
    <property type="match status" value="1"/>
</dbReference>
<dbReference type="FunFam" id="3.40.50.20:FF:000006">
    <property type="entry name" value="Phosphoribosylamine--glycine ligase, chloroplastic"/>
    <property type="match status" value="1"/>
</dbReference>
<dbReference type="FunFam" id="3.30.1490.20:FF:000006">
    <property type="entry name" value="phosphoribosylamine--glycine ligase, chloroplastic-like"/>
    <property type="match status" value="1"/>
</dbReference>
<dbReference type="FunFam" id="3.30.1330.10:FF:000001">
    <property type="entry name" value="Phosphoribosylformylglycinamidine cyclo-ligase"/>
    <property type="match status" value="1"/>
</dbReference>
<dbReference type="FunFam" id="3.30.470.20:FF:000018">
    <property type="entry name" value="Trifunctional purine biosynthetic protein adenosine-3"/>
    <property type="match status" value="1"/>
</dbReference>
<dbReference type="FunFam" id="3.90.600.10:FF:000001">
    <property type="entry name" value="Trifunctional purine biosynthetic protein adenosine-3"/>
    <property type="match status" value="1"/>
</dbReference>
<dbReference type="FunFam" id="3.90.650.10:FF:000019">
    <property type="entry name" value="Trifunctional purine biosynthetic protein adenosine-3"/>
    <property type="match status" value="1"/>
</dbReference>
<dbReference type="Gene3D" id="3.40.50.20">
    <property type="match status" value="1"/>
</dbReference>
<dbReference type="Gene3D" id="3.30.1490.20">
    <property type="entry name" value="ATP-grasp fold, A domain"/>
    <property type="match status" value="1"/>
</dbReference>
<dbReference type="Gene3D" id="3.30.470.20">
    <property type="entry name" value="ATP-grasp fold, B domain"/>
    <property type="match status" value="1"/>
</dbReference>
<dbReference type="Gene3D" id="3.90.600.10">
    <property type="entry name" value="Phosphoribosylglycinamide synthetase, C-terminal domain"/>
    <property type="match status" value="1"/>
</dbReference>
<dbReference type="Gene3D" id="3.90.650.10">
    <property type="entry name" value="PurM-like C-terminal domain"/>
    <property type="match status" value="1"/>
</dbReference>
<dbReference type="Gene3D" id="3.30.1330.10">
    <property type="entry name" value="PurM-like, N-terminal domain"/>
    <property type="match status" value="1"/>
</dbReference>
<dbReference type="HAMAP" id="MF_00741">
    <property type="entry name" value="AIRS"/>
    <property type="match status" value="1"/>
</dbReference>
<dbReference type="HAMAP" id="MF_00138">
    <property type="entry name" value="GARS"/>
    <property type="match status" value="1"/>
</dbReference>
<dbReference type="InterPro" id="IPR011761">
    <property type="entry name" value="ATP-grasp"/>
</dbReference>
<dbReference type="InterPro" id="IPR013815">
    <property type="entry name" value="ATP_grasp_subdomain_1"/>
</dbReference>
<dbReference type="InterPro" id="IPR016185">
    <property type="entry name" value="PreATP-grasp_dom_sf"/>
</dbReference>
<dbReference type="InterPro" id="IPR020561">
    <property type="entry name" value="PRibGlycinamid_synth_ATP-grasp"/>
</dbReference>
<dbReference type="InterPro" id="IPR000115">
    <property type="entry name" value="PRibGlycinamide_synth"/>
</dbReference>
<dbReference type="InterPro" id="IPR020560">
    <property type="entry name" value="PRibGlycinamide_synth_C-dom"/>
</dbReference>
<dbReference type="InterPro" id="IPR037123">
    <property type="entry name" value="PRibGlycinamide_synth_C_sf"/>
</dbReference>
<dbReference type="InterPro" id="IPR020559">
    <property type="entry name" value="PRibGlycinamide_synth_CS"/>
</dbReference>
<dbReference type="InterPro" id="IPR020562">
    <property type="entry name" value="PRibGlycinamide_synth_N"/>
</dbReference>
<dbReference type="InterPro" id="IPR010918">
    <property type="entry name" value="PurM-like_C_dom"/>
</dbReference>
<dbReference type="InterPro" id="IPR036676">
    <property type="entry name" value="PurM-like_C_sf"/>
</dbReference>
<dbReference type="InterPro" id="IPR016188">
    <property type="entry name" value="PurM-like_N"/>
</dbReference>
<dbReference type="InterPro" id="IPR036921">
    <property type="entry name" value="PurM-like_N_sf"/>
</dbReference>
<dbReference type="InterPro" id="IPR004733">
    <property type="entry name" value="PurM_cligase"/>
</dbReference>
<dbReference type="InterPro" id="IPR011054">
    <property type="entry name" value="Rudment_hybrid_motif"/>
</dbReference>
<dbReference type="NCBIfam" id="TIGR00877">
    <property type="entry name" value="purD"/>
    <property type="match status" value="1"/>
</dbReference>
<dbReference type="NCBIfam" id="TIGR00878">
    <property type="entry name" value="purM"/>
    <property type="match status" value="1"/>
</dbReference>
<dbReference type="PANTHER" id="PTHR10520:SF12">
    <property type="entry name" value="TRIFUNCTIONAL PURINE BIOSYNTHETIC PROTEIN ADENOSINE-3"/>
    <property type="match status" value="1"/>
</dbReference>
<dbReference type="PANTHER" id="PTHR10520">
    <property type="entry name" value="TRIFUNCTIONAL PURINE BIOSYNTHETIC PROTEIN ADENOSINE-3-RELATED"/>
    <property type="match status" value="1"/>
</dbReference>
<dbReference type="Pfam" id="PF00586">
    <property type="entry name" value="AIRS"/>
    <property type="match status" value="1"/>
</dbReference>
<dbReference type="Pfam" id="PF02769">
    <property type="entry name" value="AIRS_C"/>
    <property type="match status" value="1"/>
</dbReference>
<dbReference type="Pfam" id="PF01071">
    <property type="entry name" value="GARS_A"/>
    <property type="match status" value="1"/>
</dbReference>
<dbReference type="Pfam" id="PF02843">
    <property type="entry name" value="GARS_C"/>
    <property type="match status" value="1"/>
</dbReference>
<dbReference type="Pfam" id="PF02844">
    <property type="entry name" value="GARS_N"/>
    <property type="match status" value="1"/>
</dbReference>
<dbReference type="SMART" id="SM01209">
    <property type="entry name" value="GARS_A"/>
    <property type="match status" value="1"/>
</dbReference>
<dbReference type="SMART" id="SM01210">
    <property type="entry name" value="GARS_C"/>
    <property type="match status" value="1"/>
</dbReference>
<dbReference type="SUPFAM" id="SSF56059">
    <property type="entry name" value="Glutathione synthetase ATP-binding domain-like"/>
    <property type="match status" value="1"/>
</dbReference>
<dbReference type="SUPFAM" id="SSF52440">
    <property type="entry name" value="PreATP-grasp domain"/>
    <property type="match status" value="1"/>
</dbReference>
<dbReference type="SUPFAM" id="SSF56042">
    <property type="entry name" value="PurM C-terminal domain-like"/>
    <property type="match status" value="1"/>
</dbReference>
<dbReference type="SUPFAM" id="SSF55326">
    <property type="entry name" value="PurM N-terminal domain-like"/>
    <property type="match status" value="1"/>
</dbReference>
<dbReference type="SUPFAM" id="SSF51246">
    <property type="entry name" value="Rudiment single hybrid motif"/>
    <property type="match status" value="1"/>
</dbReference>
<dbReference type="PROSITE" id="PS50975">
    <property type="entry name" value="ATP_GRASP"/>
    <property type="match status" value="1"/>
</dbReference>
<dbReference type="PROSITE" id="PS00184">
    <property type="entry name" value="GARS"/>
    <property type="match status" value="1"/>
</dbReference>
<reference evidence="10" key="1">
    <citation type="journal article" date="2014" name="PLoS Genet.">
        <title>Analysis of the genome and transcriptome of Cryptococcus neoformans var. grubii reveals complex RNA expression and microevolution leading to virulence attenuation.</title>
        <authorList>
            <person name="Janbon G."/>
            <person name="Ormerod K.L."/>
            <person name="Paulet D."/>
            <person name="Byrnes E.J. III"/>
            <person name="Yadav V."/>
            <person name="Chatterjee G."/>
            <person name="Mullapudi N."/>
            <person name="Hon C.-C."/>
            <person name="Billmyre R.B."/>
            <person name="Brunel F."/>
            <person name="Bahn Y.-S."/>
            <person name="Chen W."/>
            <person name="Chen Y."/>
            <person name="Chow E.W.L."/>
            <person name="Coppee J.-Y."/>
            <person name="Floyd-Averette A."/>
            <person name="Gaillardin C."/>
            <person name="Gerik K.J."/>
            <person name="Goldberg J."/>
            <person name="Gonzalez-Hilarion S."/>
            <person name="Gujja S."/>
            <person name="Hamlin J.L."/>
            <person name="Hsueh Y.-P."/>
            <person name="Ianiri G."/>
            <person name="Jones S."/>
            <person name="Kodira C.D."/>
            <person name="Kozubowski L."/>
            <person name="Lam W."/>
            <person name="Marra M."/>
            <person name="Mesner L.D."/>
            <person name="Mieczkowski P.A."/>
            <person name="Moyrand F."/>
            <person name="Nielsen K."/>
            <person name="Proux C."/>
            <person name="Rossignol T."/>
            <person name="Schein J.E."/>
            <person name="Sun S."/>
            <person name="Wollschlaeger C."/>
            <person name="Wood I.A."/>
            <person name="Zeng Q."/>
            <person name="Neuveglise C."/>
            <person name="Newlon C.S."/>
            <person name="Perfect J.R."/>
            <person name="Lodge J.K."/>
            <person name="Idnurm A."/>
            <person name="Stajich J.E."/>
            <person name="Kronstad J.W."/>
            <person name="Sanyal K."/>
            <person name="Heitman J."/>
            <person name="Fraser J.A."/>
            <person name="Cuomo C.A."/>
            <person name="Dietrich F.S."/>
        </authorList>
    </citation>
    <scope>NUCLEOTIDE SEQUENCE [LARGE SCALE GENOMIC DNA]</scope>
    <source>
        <strain evidence="10">H99 / ATCC 208821 / CBS 10515 / FGSC 9487</strain>
    </source>
</reference>
<reference evidence="7" key="2">
    <citation type="journal article" date="2021" name="J. Biol. Chem.">
        <title>Structural features of Cryptococcus neoformans bifunctional GAR/AIR synthetase may present novel antifungal drug targets.</title>
        <authorList>
            <person name="Chua S.M.H."/>
            <person name="Wizrah M.S.I."/>
            <person name="Luo Z."/>
            <person name="Lim B.Y.J."/>
            <person name="Kappler U."/>
            <person name="Kobe B."/>
            <person name="Fraser J.A."/>
        </authorList>
    </citation>
    <scope>X-RAY CRYSTALLOGRAPHY (2.0 ANGSTROMS) OF 1-452</scope>
    <scope>FUNCTION</scope>
    <scope>CATALYTIC ACTIVITY</scope>
    <scope>BIOPHYSICOCHEMICAL PROPERTIES</scope>
    <scope>SUBUNIT</scope>
    <scope>DISRUPTION PHENOTYPE</scope>
</reference>